<dbReference type="EMBL" id="DQ767878">
    <property type="protein sequence ID" value="ABG77523.1"/>
    <property type="molecule type" value="mRNA"/>
</dbReference>
<dbReference type="SMR" id="Q0PV50"/>
<dbReference type="GlyCosmos" id="Q0PV50">
    <property type="glycosylation" value="14 sites, No reported glycans"/>
</dbReference>
<dbReference type="GO" id="GO:0005769">
    <property type="term" value="C:early endosome"/>
    <property type="evidence" value="ECO:0007669"/>
    <property type="project" value="UniProtKB-SubCell"/>
</dbReference>
<dbReference type="GO" id="GO:0005789">
    <property type="term" value="C:endoplasmic reticulum membrane"/>
    <property type="evidence" value="ECO:0007669"/>
    <property type="project" value="UniProtKB-SubCell"/>
</dbReference>
<dbReference type="GO" id="GO:0010008">
    <property type="term" value="C:endosome membrane"/>
    <property type="evidence" value="ECO:0007669"/>
    <property type="project" value="UniProtKB-SubCell"/>
</dbReference>
<dbReference type="GO" id="GO:0005886">
    <property type="term" value="C:plasma membrane"/>
    <property type="evidence" value="ECO:0007669"/>
    <property type="project" value="TreeGrafter"/>
</dbReference>
<dbReference type="GO" id="GO:0003723">
    <property type="term" value="F:RNA binding"/>
    <property type="evidence" value="ECO:0007669"/>
    <property type="project" value="UniProtKB-KW"/>
</dbReference>
<dbReference type="GO" id="GO:0038023">
    <property type="term" value="F:signaling receptor activity"/>
    <property type="evidence" value="ECO:0007669"/>
    <property type="project" value="TreeGrafter"/>
</dbReference>
<dbReference type="GO" id="GO:0006954">
    <property type="term" value="P:inflammatory response"/>
    <property type="evidence" value="ECO:0007669"/>
    <property type="project" value="UniProtKB-KW"/>
</dbReference>
<dbReference type="GO" id="GO:0045087">
    <property type="term" value="P:innate immune response"/>
    <property type="evidence" value="ECO:0007669"/>
    <property type="project" value="UniProtKB-KW"/>
</dbReference>
<dbReference type="GO" id="GO:0007165">
    <property type="term" value="P:signal transduction"/>
    <property type="evidence" value="ECO:0007669"/>
    <property type="project" value="InterPro"/>
</dbReference>
<dbReference type="FunFam" id="3.40.50.10140:FF:000008">
    <property type="entry name" value="Toll-like receptor 3"/>
    <property type="match status" value="1"/>
</dbReference>
<dbReference type="FunFam" id="3.80.10.10:FF:000137">
    <property type="entry name" value="Toll-like receptor 3"/>
    <property type="match status" value="1"/>
</dbReference>
<dbReference type="Gene3D" id="3.80.10.10">
    <property type="entry name" value="Ribonuclease Inhibitor"/>
    <property type="match status" value="1"/>
</dbReference>
<dbReference type="Gene3D" id="3.40.50.10140">
    <property type="entry name" value="Toll/interleukin-1 receptor homology (TIR) domain"/>
    <property type="match status" value="1"/>
</dbReference>
<dbReference type="InterPro" id="IPR000483">
    <property type="entry name" value="Cys-rich_flank_reg_C"/>
</dbReference>
<dbReference type="InterPro" id="IPR001611">
    <property type="entry name" value="Leu-rich_rpt"/>
</dbReference>
<dbReference type="InterPro" id="IPR003591">
    <property type="entry name" value="Leu-rich_rpt_typical-subtyp"/>
</dbReference>
<dbReference type="InterPro" id="IPR032675">
    <property type="entry name" value="LRR_dom_sf"/>
</dbReference>
<dbReference type="InterPro" id="IPR000157">
    <property type="entry name" value="TIR_dom"/>
</dbReference>
<dbReference type="InterPro" id="IPR041015">
    <property type="entry name" value="TLR3_TMD"/>
</dbReference>
<dbReference type="InterPro" id="IPR035897">
    <property type="entry name" value="Toll_tir_struct_dom_sf"/>
</dbReference>
<dbReference type="PANTHER" id="PTHR24365:SF541">
    <property type="entry name" value="PROTEIN TOLL-RELATED"/>
    <property type="match status" value="1"/>
</dbReference>
<dbReference type="PANTHER" id="PTHR24365">
    <property type="entry name" value="TOLL-LIKE RECEPTOR"/>
    <property type="match status" value="1"/>
</dbReference>
<dbReference type="Pfam" id="PF13516">
    <property type="entry name" value="LRR_6"/>
    <property type="match status" value="1"/>
</dbReference>
<dbReference type="Pfam" id="PF13855">
    <property type="entry name" value="LRR_8"/>
    <property type="match status" value="7"/>
</dbReference>
<dbReference type="Pfam" id="PF01582">
    <property type="entry name" value="TIR"/>
    <property type="match status" value="1"/>
</dbReference>
<dbReference type="Pfam" id="PF17968">
    <property type="entry name" value="Tlr3_TMD"/>
    <property type="match status" value="1"/>
</dbReference>
<dbReference type="PRINTS" id="PR00019">
    <property type="entry name" value="LEURICHRPT"/>
</dbReference>
<dbReference type="SMART" id="SM00365">
    <property type="entry name" value="LRR_SD22"/>
    <property type="match status" value="9"/>
</dbReference>
<dbReference type="SMART" id="SM00369">
    <property type="entry name" value="LRR_TYP"/>
    <property type="match status" value="16"/>
</dbReference>
<dbReference type="SMART" id="SM00082">
    <property type="entry name" value="LRRCT"/>
    <property type="match status" value="1"/>
</dbReference>
<dbReference type="SMART" id="SM00255">
    <property type="entry name" value="TIR"/>
    <property type="match status" value="1"/>
</dbReference>
<dbReference type="SUPFAM" id="SSF52058">
    <property type="entry name" value="L domain-like"/>
    <property type="match status" value="2"/>
</dbReference>
<dbReference type="SUPFAM" id="SSF52200">
    <property type="entry name" value="Toll/Interleukin receptor TIR domain"/>
    <property type="match status" value="1"/>
</dbReference>
<dbReference type="PROSITE" id="PS51450">
    <property type="entry name" value="LRR"/>
    <property type="match status" value="20"/>
</dbReference>
<dbReference type="PROSITE" id="PS50104">
    <property type="entry name" value="TIR"/>
    <property type="match status" value="1"/>
</dbReference>
<accession>Q0PV50</accession>
<sequence>MSRPLPYHIYFFTGLLTCWILCTSSAHKCTVRHEVADCSHLKLTQIPEDLPTNITVLNLTHNQLRRLPPANFTRYSRLTILDGGFNSISKLEPELCQNLPWLEILNLQHNEISQLSDKTFVFCMNLTELHLMSNSIQKIQNDPFKNLKNLIKLDLSHNGLSSTKLGTQLQLENLQELLLSNNKISSLTPEELDFLGNSSLERLELSSNQIKEFSPGCFHAIGKLSGLSLNNAKLSPSLTEKLCLELSNTSIENLSLSSNQLDTISHTTFSGLKQTNLTTLDLSRSSLRVMDNDSFAWLPHLEYLSLEYNNIEHLSSRSFYGLSNLRHLNLRWSFTRQSISLTSLPKIDDFSFQWLKCLEYLNMEDNNFPSIKRNTFTGLVRLKFLSLSNSFSSLRTLTNETFLSLAGSPLLLLNLTKNKISKIQSGAFSWLGHLEVLDLGLNEIGQELTGQEWRGLDNIVEIYLSYNKYLELTTNSFTSVPSLQRLMLRRVALKNVACSPSPFRPLPNLVILDLSNNNIANVNDELLKGLEKLEILDLQHNNLARLWKHANPGGPVQFLKGLSHLRILNLGSNGFDEIPVEAFKDLRELKSIDLGMNNLNILPQSVFDNQVSLKSLSLQKNLITSVQKTVFGPAFRNLSYLDMRFNPFDCTCESIAWFVNWINSTHTNISELSNHYLCNTPPQYHGFPVMLFDVSPCKDSAPFELLFMINTNILLIFIFIVLLIHFEGWRISFYWNVSVHRVLGFKEIDRAEQFEYAAYIIHAYKDRDWVWKHFSPMEEEDHTLRFCLEERDFEAGVLKLEAIVNSIRRSRKIIFVITQNLLKDPLCKRFKVHRAVQQAIEQNLDSIILIFLEEIPDYKLNHALCLRRGMFKSHCILNWPVQKERVNAFHHKLKVALGSRNSAH</sequence>
<gene>
    <name type="primary">TLR3</name>
</gene>
<reference key="1">
    <citation type="journal article" date="2007" name="Immunogenetics">
        <title>Molecular characterization of coding sequences and analysis of Toll-like receptor 3 mRNA expression in water buffalo (Bubalus bubalis) and nilgai (Boselaphus tragocamelus).</title>
        <authorList>
            <person name="Dhara A."/>
            <person name="Saini M."/>
            <person name="Das D.K."/>
            <person name="Swarup D."/>
            <person name="Sharma B."/>
            <person name="Kumar S."/>
            <person name="Gupta P.K."/>
        </authorList>
    </citation>
    <scope>NUCLEOTIDE SEQUENCE [MRNA]</scope>
</reference>
<feature type="signal peptide" evidence="3">
    <location>
        <begin position="1"/>
        <end position="26"/>
    </location>
</feature>
<feature type="chain" id="PRO_0000253495" description="Toll-like receptor 3">
    <location>
        <begin position="27"/>
        <end position="904"/>
    </location>
</feature>
<feature type="topological domain" description="Lumenal" evidence="3">
    <location>
        <begin position="27"/>
        <end position="705"/>
    </location>
</feature>
<feature type="transmembrane region" description="Helical" evidence="3">
    <location>
        <begin position="706"/>
        <end position="726"/>
    </location>
</feature>
<feature type="topological domain" description="Cytoplasmic" evidence="3">
    <location>
        <begin position="727"/>
        <end position="904"/>
    </location>
</feature>
<feature type="domain" description="LRRNT">
    <location>
        <begin position="27"/>
        <end position="52"/>
    </location>
</feature>
<feature type="repeat" description="LRR 1">
    <location>
        <begin position="53"/>
        <end position="74"/>
    </location>
</feature>
<feature type="repeat" description="LRR 2">
    <location>
        <begin position="77"/>
        <end position="98"/>
    </location>
</feature>
<feature type="repeat" description="LRR 3">
    <location>
        <begin position="101"/>
        <end position="122"/>
    </location>
</feature>
<feature type="repeat" description="LRR 4">
    <location>
        <begin position="125"/>
        <end position="146"/>
    </location>
</feature>
<feature type="repeat" description="LRR 5">
    <location>
        <begin position="149"/>
        <end position="170"/>
    </location>
</feature>
<feature type="repeat" description="LRR 6">
    <location>
        <begin position="173"/>
        <end position="196"/>
    </location>
</feature>
<feature type="repeat" description="LRR 7">
    <location>
        <begin position="199"/>
        <end position="220"/>
    </location>
</feature>
<feature type="repeat" description="LRR 8">
    <location>
        <begin position="223"/>
        <end position="245"/>
    </location>
</feature>
<feature type="repeat" description="LRR 9">
    <location>
        <begin position="250"/>
        <end position="271"/>
    </location>
</feature>
<feature type="repeat" description="LRR 10">
    <location>
        <begin position="276"/>
        <end position="297"/>
    </location>
</feature>
<feature type="repeat" description="LRR 11">
    <location>
        <begin position="300"/>
        <end position="321"/>
    </location>
</feature>
<feature type="repeat" description="LRR 12">
    <location>
        <begin position="324"/>
        <end position="345"/>
    </location>
</feature>
<feature type="repeat" description="LRR 13">
    <location>
        <begin position="357"/>
        <end position="378"/>
    </location>
</feature>
<feature type="repeat" description="LRR 14">
    <location>
        <begin position="381"/>
        <end position="401"/>
    </location>
</feature>
<feature type="repeat" description="LRR 15">
    <location>
        <begin position="409"/>
        <end position="430"/>
    </location>
</feature>
<feature type="repeat" description="LRR 16">
    <location>
        <begin position="433"/>
        <end position="455"/>
    </location>
</feature>
<feature type="repeat" description="LRR 17">
    <location>
        <begin position="466"/>
        <end position="487"/>
    </location>
</feature>
<feature type="repeat" description="LRR 18">
    <location>
        <begin position="508"/>
        <end position="529"/>
    </location>
</feature>
<feature type="repeat" description="LRR 19">
    <location>
        <begin position="532"/>
        <end position="553"/>
    </location>
</feature>
<feature type="repeat" description="LRR 20">
    <location>
        <begin position="564"/>
        <end position="585"/>
    </location>
</feature>
<feature type="repeat" description="LRR 21">
    <location>
        <begin position="588"/>
        <end position="609"/>
    </location>
</feature>
<feature type="repeat" description="LRR 22">
    <location>
        <begin position="612"/>
        <end position="633"/>
    </location>
</feature>
<feature type="domain" description="LRRCT">
    <location>
        <begin position="646"/>
        <end position="699"/>
    </location>
</feature>
<feature type="domain" description="TIR" evidence="4">
    <location>
        <begin position="754"/>
        <end position="897"/>
    </location>
</feature>
<feature type="modified residue" description="Phosphotyrosine" evidence="2">
    <location>
        <position position="759"/>
    </location>
</feature>
<feature type="modified residue" description="Phosphotyrosine" evidence="2">
    <location>
        <position position="858"/>
    </location>
</feature>
<feature type="glycosylation site" description="N-linked (GlcNAc...) asparagine" evidence="3">
    <location>
        <position position="53"/>
    </location>
</feature>
<feature type="glycosylation site" description="N-linked (GlcNAc...) asparagine" evidence="3">
    <location>
        <position position="58"/>
    </location>
</feature>
<feature type="glycosylation site" description="N-linked (GlcNAc...) asparagine" evidence="3">
    <location>
        <position position="71"/>
    </location>
</feature>
<feature type="glycosylation site" description="N-linked (GlcNAc...) asparagine" evidence="3">
    <location>
        <position position="125"/>
    </location>
</feature>
<feature type="glycosylation site" description="N-linked (GlcNAc...) asparagine" evidence="3">
    <location>
        <position position="197"/>
    </location>
</feature>
<feature type="glycosylation site" description="N-linked (GlcNAc...) asparagine" evidence="3">
    <location>
        <position position="248"/>
    </location>
</feature>
<feature type="glycosylation site" description="N-linked (GlcNAc...) asparagine" evidence="3">
    <location>
        <position position="253"/>
    </location>
</feature>
<feature type="glycosylation site" description="N-linked (GlcNAc...) asparagine" evidence="3">
    <location>
        <position position="276"/>
    </location>
</feature>
<feature type="glycosylation site" description="N-linked (GlcNAc...) asparagine" evidence="3">
    <location>
        <position position="292"/>
    </location>
</feature>
<feature type="glycosylation site" description="N-linked (GlcNAc...) asparagine" evidence="3">
    <location>
        <position position="399"/>
    </location>
</feature>
<feature type="glycosylation site" description="N-linked (GlcNAc...) asparagine" evidence="3">
    <location>
        <position position="414"/>
    </location>
</feature>
<feature type="glycosylation site" description="N-linked (GlcNAc...) asparagine" evidence="3">
    <location>
        <position position="637"/>
    </location>
</feature>
<feature type="glycosylation site" description="N-linked (GlcNAc...) asparagine" evidence="3">
    <location>
        <position position="663"/>
    </location>
</feature>
<feature type="glycosylation site" description="N-linked (GlcNAc...) asparagine" evidence="3">
    <location>
        <position position="668"/>
    </location>
</feature>
<feature type="disulfide bond" evidence="1">
    <location>
        <begin position="29"/>
        <end position="38"/>
    </location>
</feature>
<feature type="disulfide bond" evidence="1">
    <location>
        <begin position="96"/>
        <end position="123"/>
    </location>
</feature>
<feature type="disulfide bond" evidence="1">
    <location>
        <begin position="650"/>
        <end position="678"/>
    </location>
</feature>
<feature type="disulfide bond" evidence="1">
    <location>
        <begin position="652"/>
        <end position="697"/>
    </location>
</feature>
<feature type="cross-link" description="Glycyl lysine isopeptide (Lys-Gly) (interchain with G-Cter in ubiquitin)" evidence="2">
    <location>
        <position position="812"/>
    </location>
</feature>
<feature type="cross-link" description="Glycyl lysine isopeptide (Lys-Gly) (interchain with G-Cter in ubiquitin)" evidence="2">
    <location>
        <position position="831"/>
    </location>
</feature>
<organism>
    <name type="scientific">Boselaphus tragocamelus</name>
    <name type="common">Nilgai</name>
    <dbReference type="NCBI Taxonomy" id="9917"/>
    <lineage>
        <taxon>Eukaryota</taxon>
        <taxon>Metazoa</taxon>
        <taxon>Chordata</taxon>
        <taxon>Craniata</taxon>
        <taxon>Vertebrata</taxon>
        <taxon>Euteleostomi</taxon>
        <taxon>Mammalia</taxon>
        <taxon>Eutheria</taxon>
        <taxon>Laurasiatheria</taxon>
        <taxon>Artiodactyla</taxon>
        <taxon>Ruminantia</taxon>
        <taxon>Pecora</taxon>
        <taxon>Bovidae</taxon>
        <taxon>Bovinae</taxon>
        <taxon>Boselaphus</taxon>
    </lineage>
</organism>
<keyword id="KW-1015">Disulfide bond</keyword>
<keyword id="KW-0256">Endoplasmic reticulum</keyword>
<keyword id="KW-0967">Endosome</keyword>
<keyword id="KW-0325">Glycoprotein</keyword>
<keyword id="KW-0391">Immunity</keyword>
<keyword id="KW-0395">Inflammatory response</keyword>
<keyword id="KW-0399">Innate immunity</keyword>
<keyword id="KW-1017">Isopeptide bond</keyword>
<keyword id="KW-0433">Leucine-rich repeat</keyword>
<keyword id="KW-0472">Membrane</keyword>
<keyword id="KW-0597">Phosphoprotein</keyword>
<keyword id="KW-0675">Receptor</keyword>
<keyword id="KW-0677">Repeat</keyword>
<keyword id="KW-0694">RNA-binding</keyword>
<keyword id="KW-0732">Signal</keyword>
<keyword id="KW-0812">Transmembrane</keyword>
<keyword id="KW-1133">Transmembrane helix</keyword>
<keyword id="KW-0832">Ubl conjugation</keyword>
<evidence type="ECO:0000250" key="1"/>
<evidence type="ECO:0000250" key="2">
    <source>
        <dbReference type="UniProtKB" id="O15455"/>
    </source>
</evidence>
<evidence type="ECO:0000255" key="3"/>
<evidence type="ECO:0000255" key="4">
    <source>
        <dbReference type="PROSITE-ProRule" id="PRU00204"/>
    </source>
</evidence>
<evidence type="ECO:0000305" key="5"/>
<proteinExistence type="evidence at transcript level"/>
<comment type="function">
    <text evidence="1">Key component of innate and adaptive immunity. TLRs (Toll-like receptors) control host immune response against pathogens through recognition of molecular patterns specific to microorganisms. TLR3 is a nucleotide-sensing TLR which is activated by double-stranded RNA, a sign of viral infection. Acts via the adapter TRIF/TICAM1, leading to NF-kappa-B activation, cytokine secretion and the inflammatory response (By similarity).</text>
</comment>
<comment type="subunit">
    <text evidence="2">Monomer and homodimer; dimerization is triggered by ligand-binding and is required for TLR3 signaling. Interacts (via transmembrane domain) with UNC93B1. Interacts with TICAM1 (via the TIR domain) in response to poly(I:C) and this interaction is enhanced the presence of WDFY1. Interacts with SRC; upon binding of double-stranded RNA. The tyrosine-phosphorylated form (via TIR domain) interacts with WDFY1 (via WD repeat 2) in response to poly(I:C).</text>
</comment>
<comment type="subcellular location">
    <subcellularLocation>
        <location>Endoplasmic reticulum membrane</location>
        <topology>Single-pass type I membrane protein</topology>
    </subcellularLocation>
    <subcellularLocation>
        <location evidence="2">Endosome membrane</location>
    </subcellularLocation>
    <subcellularLocation>
        <location evidence="2">Early endosome</location>
    </subcellularLocation>
</comment>
<comment type="domain">
    <text evidence="1">ds-RNA binding is mediated by LRR 1 to 3, and LRR 17 to 18.</text>
</comment>
<comment type="PTM">
    <text evidence="2">Ubiquitinated by TRIM3; leading to recognition and sorting of polyubiquitinated TLR3 by the ESCRT complexes. Ubiquitinated by ZNRF1 via 'Lys-63'-linked ubiquitin chains; leading to TLR3 lysosomal trafficking and degradation.</text>
</comment>
<comment type="similarity">
    <text evidence="5">Belongs to the Toll-like receptor family.</text>
</comment>
<name>TLR3_BOSTR</name>
<protein>
    <recommendedName>
        <fullName>Toll-like receptor 3</fullName>
    </recommendedName>
    <cdAntigenName>CD283</cdAntigenName>
</protein>